<dbReference type="EMBL" id="AE005674">
    <property type="protein sequence ID" value="AAN43851.1"/>
    <property type="status" value="ALT_INIT"/>
    <property type="molecule type" value="Genomic_DNA"/>
</dbReference>
<dbReference type="EMBL" id="AE014073">
    <property type="protein sequence ID" value="AAP17671.1"/>
    <property type="status" value="ALT_INIT"/>
    <property type="molecule type" value="Genomic_DNA"/>
</dbReference>
<dbReference type="RefSeq" id="WP_000335673.1">
    <property type="nucleotide sequence ID" value="NZ_WPGW01000032.1"/>
</dbReference>
<dbReference type="STRING" id="198214.SF2337"/>
<dbReference type="PaxDb" id="198214-SF2337"/>
<dbReference type="KEGG" id="sfx:S2471"/>
<dbReference type="HOGENOM" id="CLU_1243704_0_0_6"/>
<dbReference type="UniPathway" id="UPA00030"/>
<dbReference type="Proteomes" id="UP000001006">
    <property type="component" value="Chromosome"/>
</dbReference>
<dbReference type="Proteomes" id="UP000002673">
    <property type="component" value="Chromosome"/>
</dbReference>
<dbReference type="GO" id="GO:0005886">
    <property type="term" value="C:plasma membrane"/>
    <property type="evidence" value="ECO:0007669"/>
    <property type="project" value="UniProtKB-SubCell"/>
</dbReference>
<dbReference type="GO" id="GO:1901505">
    <property type="term" value="F:carbohydrate derivative transmembrane transporter activity"/>
    <property type="evidence" value="ECO:0007669"/>
    <property type="project" value="InterPro"/>
</dbReference>
<dbReference type="GO" id="GO:0009245">
    <property type="term" value="P:lipid A biosynthetic process"/>
    <property type="evidence" value="ECO:0007669"/>
    <property type="project" value="UniProtKB-UniRule"/>
</dbReference>
<dbReference type="GO" id="GO:0009103">
    <property type="term" value="P:lipopolysaccharide biosynthetic process"/>
    <property type="evidence" value="ECO:0007669"/>
    <property type="project" value="UniProtKB-UniRule"/>
</dbReference>
<dbReference type="FunFam" id="1.10.3730.20:FF:000003">
    <property type="entry name" value="Probable 4-amino-4-deoxy-L-arabinose-phosphoundecaprenol flippase subunit ArnF"/>
    <property type="match status" value="1"/>
</dbReference>
<dbReference type="Gene3D" id="1.10.3730.20">
    <property type="match status" value="1"/>
</dbReference>
<dbReference type="HAMAP" id="MF_00538">
    <property type="entry name" value="Flippase_ArnF"/>
    <property type="match status" value="1"/>
</dbReference>
<dbReference type="InterPro" id="IPR022832">
    <property type="entry name" value="Flippase_ArnF"/>
</dbReference>
<dbReference type="InterPro" id="IPR000390">
    <property type="entry name" value="Small_drug/metabolite_transptr"/>
</dbReference>
<dbReference type="NCBIfam" id="NF002816">
    <property type="entry name" value="PRK02971.1-2"/>
    <property type="match status" value="1"/>
</dbReference>
<dbReference type="PANTHER" id="PTHR30561:SF9">
    <property type="entry name" value="4-AMINO-4-DEOXY-L-ARABINOSE-PHOSPHOUNDECAPRENOL FLIPPASE SUBUNIT ARNF-RELATED"/>
    <property type="match status" value="1"/>
</dbReference>
<dbReference type="PANTHER" id="PTHR30561">
    <property type="entry name" value="SMR FAMILY PROTON-DEPENDENT DRUG EFFLUX TRANSPORTER SUGE"/>
    <property type="match status" value="1"/>
</dbReference>
<dbReference type="SUPFAM" id="SSF103481">
    <property type="entry name" value="Multidrug resistance efflux transporter EmrE"/>
    <property type="match status" value="1"/>
</dbReference>
<keyword id="KW-0997">Cell inner membrane</keyword>
<keyword id="KW-1003">Cell membrane</keyword>
<keyword id="KW-0441">Lipid A biosynthesis</keyword>
<keyword id="KW-0444">Lipid biosynthesis</keyword>
<keyword id="KW-0443">Lipid metabolism</keyword>
<keyword id="KW-0448">Lipopolysaccharide biosynthesis</keyword>
<keyword id="KW-0472">Membrane</keyword>
<keyword id="KW-1185">Reference proteome</keyword>
<keyword id="KW-0812">Transmembrane</keyword>
<keyword id="KW-1133">Transmembrane helix</keyword>
<keyword id="KW-0813">Transport</keyword>
<gene>
    <name evidence="1" type="primary">arnF</name>
    <name type="ordered locus">SF2337</name>
    <name type="ordered locus">S2471</name>
</gene>
<protein>
    <recommendedName>
        <fullName evidence="1">Probable 4-amino-4-deoxy-L-arabinose-phosphoundecaprenol flippase subunit ArnF</fullName>
        <shortName evidence="1">L-Ara4N-phosphoundecaprenol flippase subunit ArnF</shortName>
    </recommendedName>
    <alternativeName>
        <fullName evidence="1">Undecaprenyl phosphate-aminoarabinose flippase subunit ArnF</fullName>
    </alternativeName>
</protein>
<evidence type="ECO:0000255" key="1">
    <source>
        <dbReference type="HAMAP-Rule" id="MF_00538"/>
    </source>
</evidence>
<evidence type="ECO:0000305" key="2"/>
<comment type="function">
    <text evidence="1">Translocates 4-amino-4-deoxy-L-arabinose-phosphoundecaprenol (alpha-L-Ara4N-phosphoundecaprenol) from the cytoplasmic to the periplasmic side of the inner membrane.</text>
</comment>
<comment type="pathway">
    <text evidence="1">Bacterial outer membrane biogenesis; lipopolysaccharide biosynthesis.</text>
</comment>
<comment type="subunit">
    <text evidence="1">Heterodimer of ArnE and ArnF.</text>
</comment>
<comment type="subcellular location">
    <subcellularLocation>
        <location evidence="1">Cell inner membrane</location>
        <topology evidence="1">Multi-pass membrane protein</topology>
    </subcellularLocation>
</comment>
<comment type="similarity">
    <text evidence="1">Belongs to the ArnF family.</text>
</comment>
<comment type="sequence caution" evidence="2">
    <conflict type="erroneous initiation">
        <sequence resource="EMBL-CDS" id="AAN43851"/>
    </conflict>
</comment>
<comment type="sequence caution" evidence="2">
    <conflict type="erroneous initiation">
        <sequence resource="EMBL-CDS" id="AAP17671"/>
    </conflict>
</comment>
<sequence length="128" mass="14113">MCLIWGLFSVIIASVAQLSLGFAASHLPPMTHLWDFIAALLAFGLDARILLLGLLGYLLSVFCWYKTLHKLALSKAYALLSMSYVLVWIASMVLPGWEGTFSLKALLGVACIMSGLMLIFLPTTKQRY</sequence>
<reference key="1">
    <citation type="journal article" date="2002" name="Nucleic Acids Res.">
        <title>Genome sequence of Shigella flexneri 2a: insights into pathogenicity through comparison with genomes of Escherichia coli K12 and O157.</title>
        <authorList>
            <person name="Jin Q."/>
            <person name="Yuan Z."/>
            <person name="Xu J."/>
            <person name="Wang Y."/>
            <person name="Shen Y."/>
            <person name="Lu W."/>
            <person name="Wang J."/>
            <person name="Liu H."/>
            <person name="Yang J."/>
            <person name="Yang F."/>
            <person name="Zhang X."/>
            <person name="Zhang J."/>
            <person name="Yang G."/>
            <person name="Wu H."/>
            <person name="Qu D."/>
            <person name="Dong J."/>
            <person name="Sun L."/>
            <person name="Xue Y."/>
            <person name="Zhao A."/>
            <person name="Gao Y."/>
            <person name="Zhu J."/>
            <person name="Kan B."/>
            <person name="Ding K."/>
            <person name="Chen S."/>
            <person name="Cheng H."/>
            <person name="Yao Z."/>
            <person name="He B."/>
            <person name="Chen R."/>
            <person name="Ma D."/>
            <person name="Qiang B."/>
            <person name="Wen Y."/>
            <person name="Hou Y."/>
            <person name="Yu J."/>
        </authorList>
    </citation>
    <scope>NUCLEOTIDE SEQUENCE [LARGE SCALE GENOMIC DNA]</scope>
    <source>
        <strain>301 / Serotype 2a</strain>
    </source>
</reference>
<reference key="2">
    <citation type="journal article" date="2003" name="Infect. Immun.">
        <title>Complete genome sequence and comparative genomics of Shigella flexneri serotype 2a strain 2457T.</title>
        <authorList>
            <person name="Wei J."/>
            <person name="Goldberg M.B."/>
            <person name="Burland V."/>
            <person name="Venkatesan M.M."/>
            <person name="Deng W."/>
            <person name="Fournier G."/>
            <person name="Mayhew G.F."/>
            <person name="Plunkett G. III"/>
            <person name="Rose D.J."/>
            <person name="Darling A."/>
            <person name="Mau B."/>
            <person name="Perna N.T."/>
            <person name="Payne S.M."/>
            <person name="Runyen-Janecky L.J."/>
            <person name="Zhou S."/>
            <person name="Schwartz D.C."/>
            <person name="Blattner F.R."/>
        </authorList>
    </citation>
    <scope>NUCLEOTIDE SEQUENCE [LARGE SCALE GENOMIC DNA]</scope>
    <source>
        <strain>ATCC 700930 / 2457T / Serotype 2a</strain>
    </source>
</reference>
<organism>
    <name type="scientific">Shigella flexneri</name>
    <dbReference type="NCBI Taxonomy" id="623"/>
    <lineage>
        <taxon>Bacteria</taxon>
        <taxon>Pseudomonadati</taxon>
        <taxon>Pseudomonadota</taxon>
        <taxon>Gammaproteobacteria</taxon>
        <taxon>Enterobacterales</taxon>
        <taxon>Enterobacteriaceae</taxon>
        <taxon>Shigella</taxon>
    </lineage>
</organism>
<feature type="chain" id="PRO_0000218158" description="Probable 4-amino-4-deoxy-L-arabinose-phosphoundecaprenol flippase subunit ArnF">
    <location>
        <begin position="1"/>
        <end position="128"/>
    </location>
</feature>
<feature type="topological domain" description="Cytoplasmic" evidence="1">
    <location>
        <begin position="1"/>
        <end position="2"/>
    </location>
</feature>
<feature type="transmembrane region" description="Helical" evidence="1">
    <location>
        <begin position="3"/>
        <end position="23"/>
    </location>
</feature>
<feature type="topological domain" description="Periplasmic" evidence="1">
    <location>
        <begin position="24"/>
        <end position="35"/>
    </location>
</feature>
<feature type="transmembrane region" description="Helical" evidence="1">
    <location>
        <begin position="36"/>
        <end position="56"/>
    </location>
</feature>
<feature type="topological domain" description="Cytoplasmic" evidence="1">
    <location>
        <begin position="57"/>
        <end position="76"/>
    </location>
</feature>
<feature type="transmembrane region" description="Helical" evidence="1">
    <location>
        <begin position="77"/>
        <end position="97"/>
    </location>
</feature>
<feature type="topological domain" description="Periplasmic" evidence="1">
    <location>
        <begin position="98"/>
        <end position="100"/>
    </location>
</feature>
<feature type="transmembrane region" description="Helical" evidence="1">
    <location>
        <begin position="101"/>
        <end position="121"/>
    </location>
</feature>
<feature type="topological domain" description="Cytoplasmic" evidence="1">
    <location>
        <begin position="122"/>
        <end position="128"/>
    </location>
</feature>
<accession>Q83KB5</accession>
<name>ARNF_SHIFL</name>
<proteinExistence type="inferred from homology"/>